<dbReference type="EMBL" id="CP000633">
    <property type="protein sequence ID" value="ACM37969.1"/>
    <property type="molecule type" value="Genomic_DNA"/>
</dbReference>
<dbReference type="RefSeq" id="WP_015917380.1">
    <property type="nucleotide sequence ID" value="NC_011989.1"/>
</dbReference>
<dbReference type="SMR" id="B9JTR1"/>
<dbReference type="STRING" id="311402.Avi_4104"/>
<dbReference type="KEGG" id="avi:Avi_4104"/>
<dbReference type="eggNOG" id="COG0355">
    <property type="taxonomic scope" value="Bacteria"/>
</dbReference>
<dbReference type="HOGENOM" id="CLU_084338_2_1_5"/>
<dbReference type="Proteomes" id="UP000001596">
    <property type="component" value="Chromosome 1"/>
</dbReference>
<dbReference type="GO" id="GO:0005886">
    <property type="term" value="C:plasma membrane"/>
    <property type="evidence" value="ECO:0007669"/>
    <property type="project" value="UniProtKB-SubCell"/>
</dbReference>
<dbReference type="GO" id="GO:0045259">
    <property type="term" value="C:proton-transporting ATP synthase complex"/>
    <property type="evidence" value="ECO:0007669"/>
    <property type="project" value="UniProtKB-KW"/>
</dbReference>
<dbReference type="GO" id="GO:0005524">
    <property type="term" value="F:ATP binding"/>
    <property type="evidence" value="ECO:0007669"/>
    <property type="project" value="UniProtKB-UniRule"/>
</dbReference>
<dbReference type="GO" id="GO:0046933">
    <property type="term" value="F:proton-transporting ATP synthase activity, rotational mechanism"/>
    <property type="evidence" value="ECO:0007669"/>
    <property type="project" value="UniProtKB-UniRule"/>
</dbReference>
<dbReference type="CDD" id="cd12152">
    <property type="entry name" value="F1-ATPase_delta"/>
    <property type="match status" value="1"/>
</dbReference>
<dbReference type="Gene3D" id="2.60.15.10">
    <property type="entry name" value="F0F1 ATP synthase delta/epsilon subunit, N-terminal"/>
    <property type="match status" value="1"/>
</dbReference>
<dbReference type="HAMAP" id="MF_00530">
    <property type="entry name" value="ATP_synth_epsil_bac"/>
    <property type="match status" value="1"/>
</dbReference>
<dbReference type="InterPro" id="IPR001469">
    <property type="entry name" value="ATP_synth_F1_dsu/esu"/>
</dbReference>
<dbReference type="InterPro" id="IPR020546">
    <property type="entry name" value="ATP_synth_F1_dsu/esu_N"/>
</dbReference>
<dbReference type="InterPro" id="IPR036771">
    <property type="entry name" value="ATPsynth_dsu/esu_N"/>
</dbReference>
<dbReference type="NCBIfam" id="TIGR01216">
    <property type="entry name" value="ATP_synt_epsi"/>
    <property type="match status" value="1"/>
</dbReference>
<dbReference type="NCBIfam" id="NF001851">
    <property type="entry name" value="PRK00571.2-4"/>
    <property type="match status" value="1"/>
</dbReference>
<dbReference type="PANTHER" id="PTHR13822">
    <property type="entry name" value="ATP SYNTHASE DELTA/EPSILON CHAIN"/>
    <property type="match status" value="1"/>
</dbReference>
<dbReference type="PANTHER" id="PTHR13822:SF10">
    <property type="entry name" value="ATP SYNTHASE EPSILON CHAIN, CHLOROPLASTIC"/>
    <property type="match status" value="1"/>
</dbReference>
<dbReference type="Pfam" id="PF02823">
    <property type="entry name" value="ATP-synt_DE_N"/>
    <property type="match status" value="1"/>
</dbReference>
<dbReference type="SUPFAM" id="SSF51344">
    <property type="entry name" value="Epsilon subunit of F1F0-ATP synthase N-terminal domain"/>
    <property type="match status" value="1"/>
</dbReference>
<feature type="chain" id="PRO_1000146305" description="ATP synthase epsilon chain">
    <location>
        <begin position="1"/>
        <end position="135"/>
    </location>
</feature>
<name>ATPE_ALLAM</name>
<gene>
    <name evidence="1" type="primary">atpC</name>
    <name type="ordered locus">Avi_4104</name>
</gene>
<reference key="1">
    <citation type="journal article" date="2009" name="J. Bacteriol.">
        <title>Genome sequences of three Agrobacterium biovars help elucidate the evolution of multichromosome genomes in bacteria.</title>
        <authorList>
            <person name="Slater S.C."/>
            <person name="Goldman B.S."/>
            <person name="Goodner B."/>
            <person name="Setubal J.C."/>
            <person name="Farrand S.K."/>
            <person name="Nester E.W."/>
            <person name="Burr T.J."/>
            <person name="Banta L."/>
            <person name="Dickerman A.W."/>
            <person name="Paulsen I."/>
            <person name="Otten L."/>
            <person name="Suen G."/>
            <person name="Welch R."/>
            <person name="Almeida N.F."/>
            <person name="Arnold F."/>
            <person name="Burton O.T."/>
            <person name="Du Z."/>
            <person name="Ewing A."/>
            <person name="Godsy E."/>
            <person name="Heisel S."/>
            <person name="Houmiel K.L."/>
            <person name="Jhaveri J."/>
            <person name="Lu J."/>
            <person name="Miller N.M."/>
            <person name="Norton S."/>
            <person name="Chen Q."/>
            <person name="Phoolcharoen W."/>
            <person name="Ohlin V."/>
            <person name="Ondrusek D."/>
            <person name="Pride N."/>
            <person name="Stricklin S.L."/>
            <person name="Sun J."/>
            <person name="Wheeler C."/>
            <person name="Wilson L."/>
            <person name="Zhu H."/>
            <person name="Wood D.W."/>
        </authorList>
    </citation>
    <scope>NUCLEOTIDE SEQUENCE [LARGE SCALE GENOMIC DNA]</scope>
    <source>
        <strain>ATCC BAA-846 / DSM 112012 / S4</strain>
    </source>
</reference>
<accession>B9JTR1</accession>
<keyword id="KW-0066">ATP synthesis</keyword>
<keyword id="KW-0997">Cell inner membrane</keyword>
<keyword id="KW-1003">Cell membrane</keyword>
<keyword id="KW-0139">CF(1)</keyword>
<keyword id="KW-0375">Hydrogen ion transport</keyword>
<keyword id="KW-0406">Ion transport</keyword>
<keyword id="KW-0472">Membrane</keyword>
<keyword id="KW-1185">Reference proteome</keyword>
<keyword id="KW-0813">Transport</keyword>
<proteinExistence type="inferred from homology"/>
<sequence>MADNFNFEFVSPERLLISEKVSEVVIPATEGEMTVMAHHAPTMTVIKPGVVTVKFASGKTGKYVIFGGFADITPERLTLLAESAVPVDELSRDTLMKRIELAKAELDDTENHEHRTKLEQFLNAMTHLNGVLVPA</sequence>
<comment type="function">
    <text evidence="1">Produces ATP from ADP in the presence of a proton gradient across the membrane.</text>
</comment>
<comment type="subunit">
    <text evidence="1">F-type ATPases have 2 components, CF(1) - the catalytic core - and CF(0) - the membrane proton channel. CF(1) has five subunits: alpha(3), beta(3), gamma(1), delta(1), epsilon(1). CF(0) has three main subunits: a, b and c.</text>
</comment>
<comment type="subcellular location">
    <subcellularLocation>
        <location evidence="1">Cell inner membrane</location>
        <topology evidence="1">Peripheral membrane protein</topology>
    </subcellularLocation>
</comment>
<comment type="similarity">
    <text evidence="1">Belongs to the ATPase epsilon chain family.</text>
</comment>
<protein>
    <recommendedName>
        <fullName evidence="1">ATP synthase epsilon chain</fullName>
    </recommendedName>
    <alternativeName>
        <fullName evidence="1">ATP synthase F1 sector epsilon subunit</fullName>
    </alternativeName>
    <alternativeName>
        <fullName evidence="1">F-ATPase epsilon subunit</fullName>
    </alternativeName>
</protein>
<evidence type="ECO:0000255" key="1">
    <source>
        <dbReference type="HAMAP-Rule" id="MF_00530"/>
    </source>
</evidence>
<organism>
    <name type="scientific">Allorhizobium ampelinum (strain ATCC BAA-846 / DSM 112012 / S4)</name>
    <name type="common">Agrobacterium vitis (strain S4)</name>
    <dbReference type="NCBI Taxonomy" id="311402"/>
    <lineage>
        <taxon>Bacteria</taxon>
        <taxon>Pseudomonadati</taxon>
        <taxon>Pseudomonadota</taxon>
        <taxon>Alphaproteobacteria</taxon>
        <taxon>Hyphomicrobiales</taxon>
        <taxon>Rhizobiaceae</taxon>
        <taxon>Rhizobium/Agrobacterium group</taxon>
        <taxon>Allorhizobium</taxon>
        <taxon>Allorhizobium ampelinum</taxon>
    </lineage>
</organism>